<name>KDSB_ALTMD</name>
<organism>
    <name type="scientific">Alteromonas mediterranea (strain DSM 17117 / CIP 110805 / LMG 28347 / Deep ecotype)</name>
    <dbReference type="NCBI Taxonomy" id="1774373"/>
    <lineage>
        <taxon>Bacteria</taxon>
        <taxon>Pseudomonadati</taxon>
        <taxon>Pseudomonadota</taxon>
        <taxon>Gammaproteobacteria</taxon>
        <taxon>Alteromonadales</taxon>
        <taxon>Alteromonadaceae</taxon>
        <taxon>Alteromonas/Salinimonas group</taxon>
        <taxon>Alteromonas</taxon>
    </lineage>
</organism>
<accession>B4RYE4</accession>
<accession>F2GC06</accession>
<dbReference type="EC" id="2.7.7.38" evidence="1"/>
<dbReference type="EMBL" id="CP001103">
    <property type="protein sequence ID" value="AEA98022.1"/>
    <property type="molecule type" value="Genomic_DNA"/>
</dbReference>
<dbReference type="RefSeq" id="WP_012518348.1">
    <property type="nucleotide sequence ID" value="NC_011138.3"/>
</dbReference>
<dbReference type="SMR" id="B4RYE4"/>
<dbReference type="KEGG" id="amc:MADE_1009420"/>
<dbReference type="HOGENOM" id="CLU_065038_0_1_6"/>
<dbReference type="UniPathway" id="UPA00030"/>
<dbReference type="UniPathway" id="UPA00358">
    <property type="reaction ID" value="UER00476"/>
</dbReference>
<dbReference type="Proteomes" id="UP000001870">
    <property type="component" value="Chromosome"/>
</dbReference>
<dbReference type="GO" id="GO:0005829">
    <property type="term" value="C:cytosol"/>
    <property type="evidence" value="ECO:0007669"/>
    <property type="project" value="TreeGrafter"/>
</dbReference>
<dbReference type="GO" id="GO:0008690">
    <property type="term" value="F:3-deoxy-manno-octulosonate cytidylyltransferase activity"/>
    <property type="evidence" value="ECO:0007669"/>
    <property type="project" value="UniProtKB-UniRule"/>
</dbReference>
<dbReference type="GO" id="GO:0033468">
    <property type="term" value="P:CMP-keto-3-deoxy-D-manno-octulosonic acid biosynthetic process"/>
    <property type="evidence" value="ECO:0007669"/>
    <property type="project" value="UniProtKB-UniRule"/>
</dbReference>
<dbReference type="GO" id="GO:0009103">
    <property type="term" value="P:lipopolysaccharide biosynthetic process"/>
    <property type="evidence" value="ECO:0007669"/>
    <property type="project" value="UniProtKB-UniRule"/>
</dbReference>
<dbReference type="CDD" id="cd02517">
    <property type="entry name" value="CMP-KDO-Synthetase"/>
    <property type="match status" value="1"/>
</dbReference>
<dbReference type="FunFam" id="3.90.550.10:FF:000011">
    <property type="entry name" value="3-deoxy-manno-octulosonate cytidylyltransferase"/>
    <property type="match status" value="1"/>
</dbReference>
<dbReference type="Gene3D" id="3.90.550.10">
    <property type="entry name" value="Spore Coat Polysaccharide Biosynthesis Protein SpsA, Chain A"/>
    <property type="match status" value="1"/>
</dbReference>
<dbReference type="HAMAP" id="MF_00057">
    <property type="entry name" value="KdsB"/>
    <property type="match status" value="1"/>
</dbReference>
<dbReference type="InterPro" id="IPR003329">
    <property type="entry name" value="Cytidylyl_trans"/>
</dbReference>
<dbReference type="InterPro" id="IPR004528">
    <property type="entry name" value="KdsB"/>
</dbReference>
<dbReference type="InterPro" id="IPR029044">
    <property type="entry name" value="Nucleotide-diphossugar_trans"/>
</dbReference>
<dbReference type="NCBIfam" id="TIGR00466">
    <property type="entry name" value="kdsB"/>
    <property type="match status" value="1"/>
</dbReference>
<dbReference type="NCBIfam" id="NF003950">
    <property type="entry name" value="PRK05450.1-3"/>
    <property type="match status" value="1"/>
</dbReference>
<dbReference type="NCBIfam" id="NF003952">
    <property type="entry name" value="PRK05450.1-5"/>
    <property type="match status" value="1"/>
</dbReference>
<dbReference type="NCBIfam" id="NF009905">
    <property type="entry name" value="PRK13368.1"/>
    <property type="match status" value="1"/>
</dbReference>
<dbReference type="PANTHER" id="PTHR42866">
    <property type="entry name" value="3-DEOXY-MANNO-OCTULOSONATE CYTIDYLYLTRANSFERASE"/>
    <property type="match status" value="1"/>
</dbReference>
<dbReference type="PANTHER" id="PTHR42866:SF2">
    <property type="entry name" value="3-DEOXY-MANNO-OCTULOSONATE CYTIDYLYLTRANSFERASE, MITOCHONDRIAL"/>
    <property type="match status" value="1"/>
</dbReference>
<dbReference type="Pfam" id="PF02348">
    <property type="entry name" value="CTP_transf_3"/>
    <property type="match status" value="1"/>
</dbReference>
<dbReference type="SUPFAM" id="SSF53448">
    <property type="entry name" value="Nucleotide-diphospho-sugar transferases"/>
    <property type="match status" value="1"/>
</dbReference>
<gene>
    <name evidence="1" type="primary">kdsB</name>
    <name type="ordered locus">MADE_1009420</name>
</gene>
<comment type="function">
    <text evidence="1">Activates KDO (a required 8-carbon sugar) for incorporation into bacterial lipopolysaccharide in Gram-negative bacteria.</text>
</comment>
<comment type="catalytic activity">
    <reaction evidence="1">
        <text>3-deoxy-alpha-D-manno-oct-2-ulosonate + CTP = CMP-3-deoxy-beta-D-manno-octulosonate + diphosphate</text>
        <dbReference type="Rhea" id="RHEA:23448"/>
        <dbReference type="ChEBI" id="CHEBI:33019"/>
        <dbReference type="ChEBI" id="CHEBI:37563"/>
        <dbReference type="ChEBI" id="CHEBI:85986"/>
        <dbReference type="ChEBI" id="CHEBI:85987"/>
        <dbReference type="EC" id="2.7.7.38"/>
    </reaction>
</comment>
<comment type="pathway">
    <text evidence="1">Nucleotide-sugar biosynthesis; CMP-3-deoxy-D-manno-octulosonate biosynthesis; CMP-3-deoxy-D-manno-octulosonate from 3-deoxy-D-manno-octulosonate and CTP: step 1/1.</text>
</comment>
<comment type="pathway">
    <text evidence="1">Bacterial outer membrane biogenesis; lipopolysaccharide biosynthesis.</text>
</comment>
<comment type="subcellular location">
    <subcellularLocation>
        <location evidence="1">Cytoplasm</location>
    </subcellularLocation>
</comment>
<comment type="similarity">
    <text evidence="1">Belongs to the KdsB family.</text>
</comment>
<protein>
    <recommendedName>
        <fullName evidence="1">3-deoxy-manno-octulosonate cytidylyltransferase</fullName>
        <ecNumber evidence="1">2.7.7.38</ecNumber>
    </recommendedName>
    <alternativeName>
        <fullName evidence="1">CMP-2-keto-3-deoxyoctulosonic acid synthase</fullName>
        <shortName evidence="1">CKS</shortName>
        <shortName evidence="1">CMP-KDO synthase</shortName>
    </alternativeName>
</protein>
<sequence length="248" mass="27363">MSFTVVIPARFGSSRFPGKPLALIDGKPMIQHVVERAKEAGAESIIVATDDERIQNVVEGFAQVCMTSVDHQSGTERIAEVIQTQNISGDTIVVNVQGDEPFIPAENIKQVATNLANAPQCQMATLSTPIVSVADVFNPNIVKVLVNEKGESIYFSRSPIPFERDYMMANPNKANTALYNRHIGIYAYRADYVNQYVNYAPSALEQIESLEQLRAIWYGDKIHCEVAVAPPPVGIDTPEDLERLLETI</sequence>
<evidence type="ECO:0000255" key="1">
    <source>
        <dbReference type="HAMAP-Rule" id="MF_00057"/>
    </source>
</evidence>
<feature type="chain" id="PRO_1000091855" description="3-deoxy-manno-octulosonate cytidylyltransferase">
    <location>
        <begin position="1"/>
        <end position="248"/>
    </location>
</feature>
<keyword id="KW-0963">Cytoplasm</keyword>
<keyword id="KW-0448">Lipopolysaccharide biosynthesis</keyword>
<keyword id="KW-0548">Nucleotidyltransferase</keyword>
<keyword id="KW-0808">Transferase</keyword>
<reference key="1">
    <citation type="journal article" date="2008" name="ISME J.">
        <title>Comparative genomics of two ecotypes of the marine planktonic copiotroph Alteromonas macleodii suggests alternative lifestyles associated with different kinds of particulate organic matter.</title>
        <authorList>
            <person name="Ivars-Martinez E."/>
            <person name="Martin-Cuadrado A.-B."/>
            <person name="D'Auria G."/>
            <person name="Mira A."/>
            <person name="Ferriera S."/>
            <person name="Johnson J."/>
            <person name="Friedman R."/>
            <person name="Rodriguez-Valera F."/>
        </authorList>
    </citation>
    <scope>NUCLEOTIDE SEQUENCE [LARGE SCALE GENOMIC DNA]</scope>
    <source>
        <strain>DSM 17117 / CIP 110805 / LMG 28347 / Deep ecotype</strain>
    </source>
</reference>
<proteinExistence type="inferred from homology"/>